<keyword id="KW-0240">DNA-directed RNA polymerase</keyword>
<keyword id="KW-0548">Nucleotidyltransferase</keyword>
<keyword id="KW-1185">Reference proteome</keyword>
<keyword id="KW-0804">Transcription</keyword>
<keyword id="KW-0808">Transferase</keyword>
<organism>
    <name type="scientific">Verminephrobacter eiseniae (strain EF01-2)</name>
    <dbReference type="NCBI Taxonomy" id="391735"/>
    <lineage>
        <taxon>Bacteria</taxon>
        <taxon>Pseudomonadati</taxon>
        <taxon>Pseudomonadota</taxon>
        <taxon>Betaproteobacteria</taxon>
        <taxon>Burkholderiales</taxon>
        <taxon>Comamonadaceae</taxon>
        <taxon>Verminephrobacter</taxon>
    </lineage>
</organism>
<comment type="function">
    <text evidence="1">DNA-dependent RNA polymerase catalyzes the transcription of DNA into RNA using the four ribonucleoside triphosphates as substrates.</text>
</comment>
<comment type="catalytic activity">
    <reaction evidence="1">
        <text>RNA(n) + a ribonucleoside 5'-triphosphate = RNA(n+1) + diphosphate</text>
        <dbReference type="Rhea" id="RHEA:21248"/>
        <dbReference type="Rhea" id="RHEA-COMP:14527"/>
        <dbReference type="Rhea" id="RHEA-COMP:17342"/>
        <dbReference type="ChEBI" id="CHEBI:33019"/>
        <dbReference type="ChEBI" id="CHEBI:61557"/>
        <dbReference type="ChEBI" id="CHEBI:140395"/>
        <dbReference type="EC" id="2.7.7.6"/>
    </reaction>
</comment>
<comment type="subunit">
    <text evidence="1">The RNAP catalytic core consists of 2 alpha, 1 beta, 1 beta' and 1 omega subunit. When a sigma factor is associated with the core the holoenzyme is formed, which can initiate transcription.</text>
</comment>
<comment type="similarity">
    <text evidence="1">Belongs to the RNA polymerase beta chain family.</text>
</comment>
<evidence type="ECO:0000255" key="1">
    <source>
        <dbReference type="HAMAP-Rule" id="MF_01321"/>
    </source>
</evidence>
<sequence>MAYSFTERKRIRKSFGTRDSVLEVPYLLQMQKDAYTAFLQADKEPRKRTIEGLQAAFDAAFPIVSHNGFVEMKFIEYNLARPAFDVRECQTRGLTFASAVRAKVQLIIYDRESSTSQSKVVKEVKEQEVYMGEVPLMTDKGSFIINGTERVIVSQLHRSPGVFFEHDKGKTHGSGKLLFSARIIPYRGSWLDFEFDPKDILYFRVDRRRKMPVTILLKAIGLNPESILANFFVNDNFRLMDSGAQMEFVPERLRGEVARFDITDKSGKLIVAKDKRVTARHTRDLEQSGSTHISVPEDFLVGRVVARTIVDADSGEILAKANDELTEALLKKLRSAAVRELQCIYTNELDQGAYISHTLRSDETVDEFAARVAIYRMMRPGEPPTEDAVQALFQRLFYNPDTYDLSRVGRMKFNARIGRDESTGPMVLSNEDILAVVKILVDLRNGNGEVDDIDHLGNRRVRCVGELAENQYRTGLARIEKAVKERLGQAEQEPLMPHDLINSKPISAALKEFFGASQLSQFMDQTNPLAEITHKRRVSALGPGGLTRERAGFEVRDVHVTHYGRVCPIETPEGPNIGLINSLALYARLNEYGFIETPYRRVVGGMVTNDIDYLSAIEEGKYVIAQANAVLDKEGRLTGDLVSAREKGESILCAADRVRYMDVSPAQIVSVAASLVPFLEHDDANRALMGANMSRQAVPVLRPEKPLVGTGIERVAAIDSGTVVTATRGGSVDYVDATRIVVRVNDDETVAGEVGVDIYNLIKYQRSNQNTNIHQRPIVKKGDRLVKGDVIADGASTDLGEIAIGQNMLIAFMPWNGYNFEDSILISERVVSEDRYTSIHIEELVVMARDTKLGAEEITRDIPNLSEQQLNRLDESGIIYVGAEVQPGDTLVGKVTPKGETTLTPEEKLLRAIFGEKASDVKDTSLRVEQGSQGTVIDVQVFTREGIARDKRAQQIIDDELKRFRLDLNDQLRIVEADAFERIEKLLLGRVANGGPHKLLKGAKIDKPYLSSVEKFHWFDIRPAQDEVAAQLELIKDALEQTRHSFDLAFEEKKKKLTQGDELPAGVLKMVKVYLAVKRRLQPGDKMAGRHGNKGVVSKIVPVEDMPYMADGTPADIVLNPLGVPSRMNIGQVLEVHLGWASKGIGQRIGDMLQQQAKAAELRKFLDKVYNARGRTEDLAQLCDEELVAMAAHLRHGMPYATPVFDGASEEEIKDMLKIAYPDEIAQRKGLTATRTQAFLYDGRTGERFERPTTIGYMHYLKLHHLVDDKMHARSTGPYSLVTQQPLGGKAQFGGQRFGEMEVWALEAYGAAYVLQEMLTVKSDDVAGRTKVYESIVKGEHAIEAGMPESFNVLVKEIRSLGLDIELERS</sequence>
<protein>
    <recommendedName>
        <fullName evidence="1">DNA-directed RNA polymerase subunit beta</fullName>
        <shortName evidence="1">RNAP subunit beta</shortName>
        <ecNumber evidence="1">2.7.7.6</ecNumber>
    </recommendedName>
    <alternativeName>
        <fullName evidence="1">RNA polymerase subunit beta</fullName>
    </alternativeName>
    <alternativeName>
        <fullName evidence="1">Transcriptase subunit beta</fullName>
    </alternativeName>
</protein>
<gene>
    <name evidence="1" type="primary">rpoB</name>
    <name type="ordered locus">Veis_2264</name>
</gene>
<accession>A1WK55</accession>
<reference key="1">
    <citation type="submission" date="2006-12" db="EMBL/GenBank/DDBJ databases">
        <title>Complete sequence of chromosome 1 of Verminephrobacter eiseniae EF01-2.</title>
        <authorList>
            <person name="Copeland A."/>
            <person name="Lucas S."/>
            <person name="Lapidus A."/>
            <person name="Barry K."/>
            <person name="Detter J.C."/>
            <person name="Glavina del Rio T."/>
            <person name="Dalin E."/>
            <person name="Tice H."/>
            <person name="Pitluck S."/>
            <person name="Chertkov O."/>
            <person name="Brettin T."/>
            <person name="Bruce D."/>
            <person name="Han C."/>
            <person name="Tapia R."/>
            <person name="Gilna P."/>
            <person name="Schmutz J."/>
            <person name="Larimer F."/>
            <person name="Land M."/>
            <person name="Hauser L."/>
            <person name="Kyrpides N."/>
            <person name="Kim E."/>
            <person name="Stahl D."/>
            <person name="Richardson P."/>
        </authorList>
    </citation>
    <scope>NUCLEOTIDE SEQUENCE [LARGE SCALE GENOMIC DNA]</scope>
    <source>
        <strain>EF01-2</strain>
    </source>
</reference>
<dbReference type="EC" id="2.7.7.6" evidence="1"/>
<dbReference type="EMBL" id="CP000542">
    <property type="protein sequence ID" value="ABM58012.1"/>
    <property type="molecule type" value="Genomic_DNA"/>
</dbReference>
<dbReference type="RefSeq" id="WP_011810015.1">
    <property type="nucleotide sequence ID" value="NC_008786.1"/>
</dbReference>
<dbReference type="SMR" id="A1WK55"/>
<dbReference type="STRING" id="391735.Veis_2264"/>
<dbReference type="GeneID" id="76460827"/>
<dbReference type="KEGG" id="vei:Veis_2264"/>
<dbReference type="eggNOG" id="COG0085">
    <property type="taxonomic scope" value="Bacteria"/>
</dbReference>
<dbReference type="HOGENOM" id="CLU_000524_4_3_4"/>
<dbReference type="OrthoDB" id="9803954at2"/>
<dbReference type="Proteomes" id="UP000000374">
    <property type="component" value="Chromosome"/>
</dbReference>
<dbReference type="GO" id="GO:0000428">
    <property type="term" value="C:DNA-directed RNA polymerase complex"/>
    <property type="evidence" value="ECO:0007669"/>
    <property type="project" value="UniProtKB-KW"/>
</dbReference>
<dbReference type="GO" id="GO:0003677">
    <property type="term" value="F:DNA binding"/>
    <property type="evidence" value="ECO:0007669"/>
    <property type="project" value="UniProtKB-UniRule"/>
</dbReference>
<dbReference type="GO" id="GO:0003899">
    <property type="term" value="F:DNA-directed RNA polymerase activity"/>
    <property type="evidence" value="ECO:0007669"/>
    <property type="project" value="UniProtKB-UniRule"/>
</dbReference>
<dbReference type="GO" id="GO:0032549">
    <property type="term" value="F:ribonucleoside binding"/>
    <property type="evidence" value="ECO:0007669"/>
    <property type="project" value="InterPro"/>
</dbReference>
<dbReference type="GO" id="GO:0006351">
    <property type="term" value="P:DNA-templated transcription"/>
    <property type="evidence" value="ECO:0007669"/>
    <property type="project" value="UniProtKB-UniRule"/>
</dbReference>
<dbReference type="CDD" id="cd00653">
    <property type="entry name" value="RNA_pol_B_RPB2"/>
    <property type="match status" value="1"/>
</dbReference>
<dbReference type="FunFam" id="2.40.50.100:FF:000006">
    <property type="entry name" value="DNA-directed RNA polymerase subunit beta"/>
    <property type="match status" value="1"/>
</dbReference>
<dbReference type="FunFam" id="3.90.1800.10:FF:000001">
    <property type="entry name" value="DNA-directed RNA polymerase subunit beta"/>
    <property type="match status" value="1"/>
</dbReference>
<dbReference type="Gene3D" id="2.40.50.100">
    <property type="match status" value="1"/>
</dbReference>
<dbReference type="Gene3D" id="2.40.50.150">
    <property type="match status" value="1"/>
</dbReference>
<dbReference type="Gene3D" id="3.90.1100.10">
    <property type="match status" value="3"/>
</dbReference>
<dbReference type="Gene3D" id="2.40.270.10">
    <property type="entry name" value="DNA-directed RNA polymerase, subunit 2, domain 6"/>
    <property type="match status" value="1"/>
</dbReference>
<dbReference type="Gene3D" id="3.90.1800.10">
    <property type="entry name" value="RNA polymerase alpha subunit dimerisation domain"/>
    <property type="match status" value="1"/>
</dbReference>
<dbReference type="Gene3D" id="3.90.1110.10">
    <property type="entry name" value="RNA polymerase Rpb2, domain 2"/>
    <property type="match status" value="1"/>
</dbReference>
<dbReference type="HAMAP" id="MF_01321">
    <property type="entry name" value="RNApol_bact_RpoB"/>
    <property type="match status" value="1"/>
</dbReference>
<dbReference type="InterPro" id="IPR019462">
    <property type="entry name" value="DNA-dir_RNA_pol_bsu_external_1"/>
</dbReference>
<dbReference type="InterPro" id="IPR015712">
    <property type="entry name" value="DNA-dir_RNA_pol_su2"/>
</dbReference>
<dbReference type="InterPro" id="IPR007120">
    <property type="entry name" value="DNA-dir_RNAP_su2_dom"/>
</dbReference>
<dbReference type="InterPro" id="IPR037033">
    <property type="entry name" value="DNA-dir_RNAP_su2_hyb_sf"/>
</dbReference>
<dbReference type="InterPro" id="IPR010243">
    <property type="entry name" value="RNA_pol_bsu_bac"/>
</dbReference>
<dbReference type="InterPro" id="IPR007121">
    <property type="entry name" value="RNA_pol_bsu_CS"/>
</dbReference>
<dbReference type="InterPro" id="IPR007644">
    <property type="entry name" value="RNA_pol_bsu_protrusion"/>
</dbReference>
<dbReference type="InterPro" id="IPR007642">
    <property type="entry name" value="RNA_pol_Rpb2_2"/>
</dbReference>
<dbReference type="InterPro" id="IPR037034">
    <property type="entry name" value="RNA_pol_Rpb2_2_sf"/>
</dbReference>
<dbReference type="InterPro" id="IPR007645">
    <property type="entry name" value="RNA_pol_Rpb2_3"/>
</dbReference>
<dbReference type="InterPro" id="IPR007641">
    <property type="entry name" value="RNA_pol_Rpb2_7"/>
</dbReference>
<dbReference type="InterPro" id="IPR014724">
    <property type="entry name" value="RNA_pol_RPB2_OB-fold"/>
</dbReference>
<dbReference type="NCBIfam" id="NF001616">
    <property type="entry name" value="PRK00405.1"/>
    <property type="match status" value="1"/>
</dbReference>
<dbReference type="NCBIfam" id="TIGR02013">
    <property type="entry name" value="rpoB"/>
    <property type="match status" value="1"/>
</dbReference>
<dbReference type="PANTHER" id="PTHR20856">
    <property type="entry name" value="DNA-DIRECTED RNA POLYMERASE I SUBUNIT 2"/>
    <property type="match status" value="1"/>
</dbReference>
<dbReference type="Pfam" id="PF04563">
    <property type="entry name" value="RNA_pol_Rpb2_1"/>
    <property type="match status" value="1"/>
</dbReference>
<dbReference type="Pfam" id="PF04561">
    <property type="entry name" value="RNA_pol_Rpb2_2"/>
    <property type="match status" value="2"/>
</dbReference>
<dbReference type="Pfam" id="PF04565">
    <property type="entry name" value="RNA_pol_Rpb2_3"/>
    <property type="match status" value="1"/>
</dbReference>
<dbReference type="Pfam" id="PF10385">
    <property type="entry name" value="RNA_pol_Rpb2_45"/>
    <property type="match status" value="1"/>
</dbReference>
<dbReference type="Pfam" id="PF00562">
    <property type="entry name" value="RNA_pol_Rpb2_6"/>
    <property type="match status" value="1"/>
</dbReference>
<dbReference type="Pfam" id="PF04560">
    <property type="entry name" value="RNA_pol_Rpb2_7"/>
    <property type="match status" value="1"/>
</dbReference>
<dbReference type="SUPFAM" id="SSF64484">
    <property type="entry name" value="beta and beta-prime subunits of DNA dependent RNA-polymerase"/>
    <property type="match status" value="1"/>
</dbReference>
<dbReference type="PROSITE" id="PS01166">
    <property type="entry name" value="RNA_POL_BETA"/>
    <property type="match status" value="1"/>
</dbReference>
<name>RPOB_VEREI</name>
<proteinExistence type="inferred from homology"/>
<feature type="chain" id="PRO_0000300423" description="DNA-directed RNA polymerase subunit beta">
    <location>
        <begin position="1"/>
        <end position="1370"/>
    </location>
</feature>